<evidence type="ECO:0000255" key="1">
    <source>
        <dbReference type="HAMAP-Rule" id="MF_00804"/>
    </source>
</evidence>
<proteinExistence type="inferred from homology"/>
<gene>
    <name evidence="1" type="primary">betB</name>
    <name type="ordered locus">BAbS19_I05370</name>
</gene>
<comment type="function">
    <text evidence="1">Involved in the biosynthesis of the osmoprotectant glycine betaine. Catalyzes the irreversible oxidation of betaine aldehyde to the corresponding acid.</text>
</comment>
<comment type="catalytic activity">
    <reaction evidence="1">
        <text>betaine aldehyde + NAD(+) + H2O = glycine betaine + NADH + 2 H(+)</text>
        <dbReference type="Rhea" id="RHEA:15305"/>
        <dbReference type="ChEBI" id="CHEBI:15377"/>
        <dbReference type="ChEBI" id="CHEBI:15378"/>
        <dbReference type="ChEBI" id="CHEBI:15710"/>
        <dbReference type="ChEBI" id="CHEBI:17750"/>
        <dbReference type="ChEBI" id="CHEBI:57540"/>
        <dbReference type="ChEBI" id="CHEBI:57945"/>
        <dbReference type="EC" id="1.2.1.8"/>
    </reaction>
    <physiologicalReaction direction="left-to-right" evidence="1">
        <dbReference type="Rhea" id="RHEA:15306"/>
    </physiologicalReaction>
</comment>
<comment type="cofactor">
    <cofactor evidence="1">
        <name>K(+)</name>
        <dbReference type="ChEBI" id="CHEBI:29103"/>
    </cofactor>
    <text evidence="1">Binds 2 potassium ions per subunit.</text>
</comment>
<comment type="pathway">
    <text evidence="1">Amine and polyamine biosynthesis; betaine biosynthesis via choline pathway; betaine from betaine aldehyde: step 1/1.</text>
</comment>
<comment type="subunit">
    <text evidence="1">Dimer of dimers.</text>
</comment>
<comment type="similarity">
    <text evidence="1">Belongs to the aldehyde dehydrogenase family.</text>
</comment>
<organism>
    <name type="scientific">Brucella abortus (strain S19)</name>
    <dbReference type="NCBI Taxonomy" id="430066"/>
    <lineage>
        <taxon>Bacteria</taxon>
        <taxon>Pseudomonadati</taxon>
        <taxon>Pseudomonadota</taxon>
        <taxon>Alphaproteobacteria</taxon>
        <taxon>Hyphomicrobiales</taxon>
        <taxon>Brucellaceae</taxon>
        <taxon>Brucella/Ochrobactrum group</taxon>
        <taxon>Brucella</taxon>
    </lineage>
</organism>
<sequence>MKAQPKASHFIGGAFVEDKAGKPLPVIYPATGEEIASLYSATPGIIEAAYAAALKAQGEWAALKPVERGRILRRTAEILREKNRKLSKLETLDTGKALQETLVADAASAADALEFFGGIISGFNGEFVELGGSFAYTRREALGICVGIGAWNYPIQIAAWKSAPALAMGNAFIFKPSENTPLSALALAEAYKEAGLPDGLFNVVQGYGDVGAALVNHRLTAKVSLTGSVPTGRRIMAQAGEQLKHVTMELGGKSPLIVFDDADLESAIGGAMLGNFYSTGQVCSNGTRVFVHKNIRERFIERLVERTRKIRIGDPFDEATQMGPLISAAQRDKVLSYIKKGKAEGATLACGGGVPKLQGFDKGFFIEPTVFADVTDTMTIAREEIFGPVMSVLEFSDEDEVIARANDSEFGLAAGVFTADLSRGHHVIGQIKAGTCWINAYNLTPVEVPFGGYKQSGIGRENGIAALAHYSQIKTVYVEMGKVDSPY</sequence>
<name>BETB_BRUA1</name>
<feature type="chain" id="PRO_1000133939" description="Betaine aldehyde dehydrogenase">
    <location>
        <begin position="1"/>
        <end position="487"/>
    </location>
</feature>
<feature type="active site" description="Charge relay system" evidence="1">
    <location>
        <position position="161"/>
    </location>
</feature>
<feature type="active site" description="Proton acceptor" evidence="1">
    <location>
        <position position="249"/>
    </location>
</feature>
<feature type="active site" description="Nucleophile" evidence="1">
    <location>
        <position position="283"/>
    </location>
</feature>
<feature type="active site" description="Charge relay system" evidence="1">
    <location>
        <position position="461"/>
    </location>
</feature>
<feature type="binding site" evidence="1">
    <location>
        <position position="27"/>
    </location>
    <ligand>
        <name>K(+)</name>
        <dbReference type="ChEBI" id="CHEBI:29103"/>
        <label>1</label>
    </ligand>
</feature>
<feature type="binding site" evidence="1">
    <location>
        <position position="93"/>
    </location>
    <ligand>
        <name>K(+)</name>
        <dbReference type="ChEBI" id="CHEBI:29103"/>
        <label>1</label>
    </ligand>
</feature>
<feature type="binding site" evidence="1">
    <location>
        <begin position="149"/>
        <end position="151"/>
    </location>
    <ligand>
        <name>NAD(+)</name>
        <dbReference type="ChEBI" id="CHEBI:57540"/>
    </ligand>
</feature>
<feature type="binding site" evidence="1">
    <location>
        <begin position="175"/>
        <end position="178"/>
    </location>
    <ligand>
        <name>NAD(+)</name>
        <dbReference type="ChEBI" id="CHEBI:57540"/>
    </ligand>
</feature>
<feature type="binding site" evidence="1">
    <location>
        <begin position="228"/>
        <end position="231"/>
    </location>
    <ligand>
        <name>NAD(+)</name>
        <dbReference type="ChEBI" id="CHEBI:57540"/>
    </ligand>
</feature>
<feature type="binding site" evidence="1">
    <location>
        <position position="243"/>
    </location>
    <ligand>
        <name>K(+)</name>
        <dbReference type="ChEBI" id="CHEBI:29103"/>
        <label>2</label>
    </ligand>
</feature>
<feature type="binding site" evidence="1">
    <location>
        <position position="251"/>
    </location>
    <ligand>
        <name>NAD(+)</name>
        <dbReference type="ChEBI" id="CHEBI:57540"/>
    </ligand>
</feature>
<feature type="binding site" description="covalent" evidence="1">
    <location>
        <position position="283"/>
    </location>
    <ligand>
        <name>NAD(+)</name>
        <dbReference type="ChEBI" id="CHEBI:57540"/>
    </ligand>
</feature>
<feature type="binding site" evidence="1">
    <location>
        <position position="384"/>
    </location>
    <ligand>
        <name>NAD(+)</name>
        <dbReference type="ChEBI" id="CHEBI:57540"/>
    </ligand>
</feature>
<feature type="binding site" evidence="1">
    <location>
        <position position="454"/>
    </location>
    <ligand>
        <name>K(+)</name>
        <dbReference type="ChEBI" id="CHEBI:29103"/>
        <label>2</label>
    </ligand>
</feature>
<feature type="binding site" evidence="1">
    <location>
        <position position="457"/>
    </location>
    <ligand>
        <name>K(+)</name>
        <dbReference type="ChEBI" id="CHEBI:29103"/>
        <label>2</label>
    </ligand>
</feature>
<feature type="modified residue" description="Cysteine sulfenic acid (-SOH)" evidence="1">
    <location>
        <position position="283"/>
    </location>
</feature>
<accession>B2SA42</accession>
<keyword id="KW-0479">Metal-binding</keyword>
<keyword id="KW-0520">NAD</keyword>
<keyword id="KW-0521">NADP</keyword>
<keyword id="KW-0558">Oxidation</keyword>
<keyword id="KW-0560">Oxidoreductase</keyword>
<keyword id="KW-0630">Potassium</keyword>
<dbReference type="EC" id="1.2.1.8" evidence="1"/>
<dbReference type="EMBL" id="CP000887">
    <property type="protein sequence ID" value="ACD72072.1"/>
    <property type="molecule type" value="Genomic_DNA"/>
</dbReference>
<dbReference type="RefSeq" id="WP_002963701.1">
    <property type="nucleotide sequence ID" value="NC_010742.1"/>
</dbReference>
<dbReference type="SMR" id="B2SA42"/>
<dbReference type="GeneID" id="97534102"/>
<dbReference type="KEGG" id="bmc:BAbS19_I05370"/>
<dbReference type="HOGENOM" id="CLU_005391_0_1_5"/>
<dbReference type="UniPathway" id="UPA00529">
    <property type="reaction ID" value="UER00386"/>
</dbReference>
<dbReference type="Proteomes" id="UP000002565">
    <property type="component" value="Chromosome 1"/>
</dbReference>
<dbReference type="GO" id="GO:0008802">
    <property type="term" value="F:betaine-aldehyde dehydrogenase (NAD+) activity"/>
    <property type="evidence" value="ECO:0007669"/>
    <property type="project" value="UniProtKB-UniRule"/>
</dbReference>
<dbReference type="GO" id="GO:0046872">
    <property type="term" value="F:metal ion binding"/>
    <property type="evidence" value="ECO:0007669"/>
    <property type="project" value="UniProtKB-KW"/>
</dbReference>
<dbReference type="GO" id="GO:0019285">
    <property type="term" value="P:glycine betaine biosynthetic process from choline"/>
    <property type="evidence" value="ECO:0007669"/>
    <property type="project" value="UniProtKB-UniRule"/>
</dbReference>
<dbReference type="CDD" id="cd07090">
    <property type="entry name" value="ALDH_F9_TMBADH"/>
    <property type="match status" value="1"/>
</dbReference>
<dbReference type="FunFam" id="3.40.605.10:FF:000026">
    <property type="entry name" value="Aldehyde dehydrogenase, putative"/>
    <property type="match status" value="1"/>
</dbReference>
<dbReference type="FunFam" id="3.40.309.10:FF:000014">
    <property type="entry name" value="NAD/NADP-dependent betaine aldehyde dehydrogenase"/>
    <property type="match status" value="1"/>
</dbReference>
<dbReference type="FunFam" id="3.40.605.10:FF:000007">
    <property type="entry name" value="NAD/NADP-dependent betaine aldehyde dehydrogenase"/>
    <property type="match status" value="1"/>
</dbReference>
<dbReference type="Gene3D" id="3.40.605.10">
    <property type="entry name" value="Aldehyde Dehydrogenase, Chain A, domain 1"/>
    <property type="match status" value="1"/>
</dbReference>
<dbReference type="Gene3D" id="3.40.309.10">
    <property type="entry name" value="Aldehyde Dehydrogenase, Chain A, domain 2"/>
    <property type="match status" value="1"/>
</dbReference>
<dbReference type="HAMAP" id="MF_00804">
    <property type="entry name" value="BADH"/>
    <property type="match status" value="1"/>
</dbReference>
<dbReference type="InterPro" id="IPR016161">
    <property type="entry name" value="Ald_DH/histidinol_DH"/>
</dbReference>
<dbReference type="InterPro" id="IPR016163">
    <property type="entry name" value="Ald_DH_C"/>
</dbReference>
<dbReference type="InterPro" id="IPR016160">
    <property type="entry name" value="Ald_DH_CS_CYS"/>
</dbReference>
<dbReference type="InterPro" id="IPR029510">
    <property type="entry name" value="Ald_DH_CS_GLU"/>
</dbReference>
<dbReference type="InterPro" id="IPR016162">
    <property type="entry name" value="Ald_DH_N"/>
</dbReference>
<dbReference type="InterPro" id="IPR015590">
    <property type="entry name" value="Aldehyde_DH_dom"/>
</dbReference>
<dbReference type="InterPro" id="IPR011264">
    <property type="entry name" value="BADH"/>
</dbReference>
<dbReference type="NCBIfam" id="TIGR01804">
    <property type="entry name" value="BADH"/>
    <property type="match status" value="1"/>
</dbReference>
<dbReference type="NCBIfam" id="NF009725">
    <property type="entry name" value="PRK13252.1"/>
    <property type="match status" value="1"/>
</dbReference>
<dbReference type="PANTHER" id="PTHR11699">
    <property type="entry name" value="ALDEHYDE DEHYDROGENASE-RELATED"/>
    <property type="match status" value="1"/>
</dbReference>
<dbReference type="Pfam" id="PF00171">
    <property type="entry name" value="Aldedh"/>
    <property type="match status" value="1"/>
</dbReference>
<dbReference type="SUPFAM" id="SSF53720">
    <property type="entry name" value="ALDH-like"/>
    <property type="match status" value="1"/>
</dbReference>
<dbReference type="PROSITE" id="PS00070">
    <property type="entry name" value="ALDEHYDE_DEHYDR_CYS"/>
    <property type="match status" value="1"/>
</dbReference>
<dbReference type="PROSITE" id="PS00687">
    <property type="entry name" value="ALDEHYDE_DEHYDR_GLU"/>
    <property type="match status" value="1"/>
</dbReference>
<reference key="1">
    <citation type="journal article" date="2008" name="PLoS ONE">
        <title>Genome sequence of Brucella abortus vaccine strain S19 compared to virulent strains yields candidate virulence genes.</title>
        <authorList>
            <person name="Crasta O.R."/>
            <person name="Folkerts O."/>
            <person name="Fei Z."/>
            <person name="Mane S.P."/>
            <person name="Evans C."/>
            <person name="Martino-Catt S."/>
            <person name="Bricker B."/>
            <person name="Yu G."/>
            <person name="Du L."/>
            <person name="Sobral B.W."/>
        </authorList>
    </citation>
    <scope>NUCLEOTIDE SEQUENCE [LARGE SCALE GENOMIC DNA]</scope>
    <source>
        <strain>S19</strain>
    </source>
</reference>
<protein>
    <recommendedName>
        <fullName evidence="1">Betaine aldehyde dehydrogenase</fullName>
        <shortName evidence="1">BADH</shortName>
        <ecNumber evidence="1">1.2.1.8</ecNumber>
    </recommendedName>
</protein>